<organism>
    <name type="scientific">Caenorhabditis elegans</name>
    <dbReference type="NCBI Taxonomy" id="6239"/>
    <lineage>
        <taxon>Eukaryota</taxon>
        <taxon>Metazoa</taxon>
        <taxon>Ecdysozoa</taxon>
        <taxon>Nematoda</taxon>
        <taxon>Chromadorea</taxon>
        <taxon>Rhabditida</taxon>
        <taxon>Rhabditina</taxon>
        <taxon>Rhabditomorpha</taxon>
        <taxon>Rhabditoidea</taxon>
        <taxon>Rhabditidae</taxon>
        <taxon>Peloderinae</taxon>
        <taxon>Caenorhabditis</taxon>
    </lineage>
</organism>
<protein>
    <recommendedName>
        <fullName evidence="10">Eukaryotic translation initiation factor 2-alpha kinase pek-1</fullName>
        <ecNumber evidence="7">2.7.11.1</ecNumber>
    </recommendedName>
    <alternativeName>
        <fullName>CePEK</fullName>
        <shortName>PEK</shortName>
    </alternativeName>
    <alternativeName>
        <fullName>PRKR-like endoplasmic reticulum kinase</fullName>
        <shortName>PERK</shortName>
    </alternativeName>
</protein>
<reference key="1">
    <citation type="journal article" date="2000" name="Biochem. J.">
        <title>Pancreatic eukaryotic initiation factor-2alpha kinase (PEK) homologues in humans, Drosophila melanogaster and Caenorhabditis elegans that mediate translational control in response to endoplasmic reticulum stress.</title>
        <authorList>
            <person name="Sood R."/>
            <person name="Porter A.C."/>
            <person name="Ma K."/>
            <person name="Quilliam L.A."/>
            <person name="Wek R.C."/>
        </authorList>
    </citation>
    <scope>NUCLEOTIDE SEQUENCE [MRNA]</scope>
    <scope>FUNCTION</scope>
    <scope>CATALYTIC ACTIVITY</scope>
    <scope>INDUCTION</scope>
</reference>
<reference key="2">
    <citation type="journal article" date="2001" name="Cell">
        <title>Complementary signaling pathways regulate the unfolded protein response and are required for C. elegans development.</title>
        <authorList>
            <person name="Shen X."/>
            <person name="Ellis R.E."/>
            <person name="Lee K."/>
            <person name="Liu C.-Y."/>
            <person name="Yang K."/>
            <person name="Solomon A."/>
            <person name="Yoshida H."/>
            <person name="Morimoto R."/>
            <person name="Kurnit D.M."/>
            <person name="Mori K."/>
            <person name="Kaufman R.J."/>
        </authorList>
    </citation>
    <scope>NUCLEOTIDE SEQUENCE [MRNA]</scope>
    <scope>FUNCTION</scope>
    <scope>TISSUE SPECIFICITY</scope>
    <scope>DISRUPTION PHENOTYPE</scope>
</reference>
<reference key="3">
    <citation type="journal article" date="1998" name="Science">
        <title>Genome sequence of the nematode C. elegans: a platform for investigating biology.</title>
        <authorList>
            <consortium name="The C. elegans sequencing consortium"/>
        </authorList>
    </citation>
    <scope>NUCLEOTIDE SEQUENCE [LARGE SCALE GENOMIC DNA]</scope>
    <source>
        <strain>Bristol N2</strain>
    </source>
</reference>
<reference key="4">
    <citation type="journal article" date="2005" name="PLoS Genet.">
        <title>Genetic interactions due to constitutive and inducible gene regulation mediated by the unfolded protein response in C. elegans.</title>
        <authorList>
            <person name="Shen X."/>
            <person name="Ellis R.E."/>
            <person name="Sakaki K."/>
            <person name="Kaufman R.J."/>
        </authorList>
    </citation>
    <scope>FUNCTION</scope>
</reference>
<reference key="5">
    <citation type="journal article" date="2010" name="Mol. Cell. Biol.">
        <title>Protein misfolding induces hypoxic preconditioning via a subset of the unfolded protein response machinery.</title>
        <authorList>
            <person name="Mao X.R."/>
            <person name="Crowder C.M."/>
        </authorList>
    </citation>
    <scope>FUNCTION</scope>
</reference>
<name>E2AKA_CAEEL</name>
<dbReference type="EC" id="2.7.11.1" evidence="7"/>
<dbReference type="EMBL" id="AF193341">
    <property type="protein sequence ID" value="AAF61201.1"/>
    <property type="molecule type" value="mRNA"/>
</dbReference>
<dbReference type="EMBL" id="AF435953">
    <property type="protein sequence ID" value="AAL30829.1"/>
    <property type="molecule type" value="mRNA"/>
</dbReference>
<dbReference type="EMBL" id="Z66563">
    <property type="protein sequence ID" value="CAA91470.1"/>
    <property type="molecule type" value="Genomic_DNA"/>
</dbReference>
<dbReference type="EMBL" id="Z68104">
    <property type="protein sequence ID" value="CAA91470.1"/>
    <property type="status" value="JOINED"/>
    <property type="molecule type" value="Genomic_DNA"/>
</dbReference>
<dbReference type="PIR" id="T20579">
    <property type="entry name" value="T20579"/>
</dbReference>
<dbReference type="RefSeq" id="NP_509912.1">
    <property type="nucleotide sequence ID" value="NM_077511.8"/>
</dbReference>
<dbReference type="SMR" id="Q19192"/>
<dbReference type="FunCoup" id="Q19192">
    <property type="interactions" value="2247"/>
</dbReference>
<dbReference type="STRING" id="6239.F46C3.1.1"/>
<dbReference type="GlyCosmos" id="Q19192">
    <property type="glycosylation" value="1 site, No reported glycans"/>
</dbReference>
<dbReference type="PaxDb" id="6239-F46C3.1"/>
<dbReference type="PeptideAtlas" id="Q19192"/>
<dbReference type="EnsemblMetazoa" id="F46C3.1.1">
    <property type="protein sequence ID" value="F46C3.1.1"/>
    <property type="gene ID" value="WBGene00003970"/>
</dbReference>
<dbReference type="GeneID" id="181334"/>
<dbReference type="KEGG" id="cel:CELE_F46C3.1"/>
<dbReference type="UCSC" id="F46C3.1">
    <property type="organism name" value="c. elegans"/>
</dbReference>
<dbReference type="AGR" id="WB:WBGene00003970"/>
<dbReference type="CTD" id="181334"/>
<dbReference type="WormBase" id="F46C3.1">
    <property type="protein sequence ID" value="CE18695"/>
    <property type="gene ID" value="WBGene00003970"/>
    <property type="gene designation" value="pek-1"/>
</dbReference>
<dbReference type="eggNOG" id="KOG1033">
    <property type="taxonomic scope" value="Eukaryota"/>
</dbReference>
<dbReference type="GeneTree" id="ENSGT00940000163863"/>
<dbReference type="HOGENOM" id="CLU_009091_0_0_1"/>
<dbReference type="InParanoid" id="Q19192"/>
<dbReference type="OMA" id="HIVSVWQ"/>
<dbReference type="OrthoDB" id="5864419at2759"/>
<dbReference type="PhylomeDB" id="Q19192"/>
<dbReference type="Reactome" id="R-CEL-1169408">
    <property type="pathway name" value="ISG15 antiviral mechanism"/>
</dbReference>
<dbReference type="Reactome" id="R-CEL-381042">
    <property type="pathway name" value="PERK regulates gene expression"/>
</dbReference>
<dbReference type="Reactome" id="R-CEL-9833482">
    <property type="pathway name" value="PKR-mediated signaling"/>
</dbReference>
<dbReference type="PRO" id="PR:Q19192"/>
<dbReference type="Proteomes" id="UP000001940">
    <property type="component" value="Chromosome X"/>
</dbReference>
<dbReference type="Bgee" id="WBGene00003970">
    <property type="expression patterns" value="Expressed in embryo and 4 other cell types or tissues"/>
</dbReference>
<dbReference type="GO" id="GO:0005737">
    <property type="term" value="C:cytoplasm"/>
    <property type="evidence" value="ECO:0000318"/>
    <property type="project" value="GO_Central"/>
</dbReference>
<dbReference type="GO" id="GO:0005789">
    <property type="term" value="C:endoplasmic reticulum membrane"/>
    <property type="evidence" value="ECO:0000250"/>
    <property type="project" value="WormBase"/>
</dbReference>
<dbReference type="GO" id="GO:0005634">
    <property type="term" value="C:nucleus"/>
    <property type="evidence" value="ECO:0000318"/>
    <property type="project" value="GO_Central"/>
</dbReference>
<dbReference type="GO" id="GO:0005524">
    <property type="term" value="F:ATP binding"/>
    <property type="evidence" value="ECO:0007669"/>
    <property type="project" value="UniProtKB-KW"/>
</dbReference>
<dbReference type="GO" id="GO:0004694">
    <property type="term" value="F:eukaryotic translation initiation factor 2alpha kinase activity"/>
    <property type="evidence" value="ECO:0000314"/>
    <property type="project" value="WormBase"/>
</dbReference>
<dbReference type="GO" id="GO:0106310">
    <property type="term" value="F:protein serine kinase activity"/>
    <property type="evidence" value="ECO:0007669"/>
    <property type="project" value="RHEA"/>
</dbReference>
<dbReference type="GO" id="GO:0030968">
    <property type="term" value="P:endoplasmic reticulum unfolded protein response"/>
    <property type="evidence" value="ECO:0000315"/>
    <property type="project" value="UniProtKB"/>
</dbReference>
<dbReference type="GO" id="GO:0010629">
    <property type="term" value="P:negative regulation of gene expression"/>
    <property type="evidence" value="ECO:0000315"/>
    <property type="project" value="UniProtKB"/>
</dbReference>
<dbReference type="GO" id="GO:0017148">
    <property type="term" value="P:negative regulation of translation"/>
    <property type="evidence" value="ECO:0000318"/>
    <property type="project" value="GO_Central"/>
</dbReference>
<dbReference type="GO" id="GO:0045947">
    <property type="term" value="P:negative regulation of translational initiation"/>
    <property type="evidence" value="ECO:0000305"/>
    <property type="project" value="WormBase"/>
</dbReference>
<dbReference type="GO" id="GO:0002119">
    <property type="term" value="P:nematode larval development"/>
    <property type="evidence" value="ECO:0000316"/>
    <property type="project" value="WormBase"/>
</dbReference>
<dbReference type="GO" id="GO:0036499">
    <property type="term" value="P:PERK-mediated unfolded protein response"/>
    <property type="evidence" value="ECO:0000315"/>
    <property type="project" value="WormBase"/>
</dbReference>
<dbReference type="GO" id="GO:0001934">
    <property type="term" value="P:positive regulation of protein phosphorylation"/>
    <property type="evidence" value="ECO:0000315"/>
    <property type="project" value="UniProtKB"/>
</dbReference>
<dbReference type="GO" id="GO:0006446">
    <property type="term" value="P:regulation of translational initiation"/>
    <property type="evidence" value="ECO:0000318"/>
    <property type="project" value="GO_Central"/>
</dbReference>
<dbReference type="GO" id="GO:0035966">
    <property type="term" value="P:response to topologically incorrect protein"/>
    <property type="evidence" value="ECO:0000315"/>
    <property type="project" value="WormBase"/>
</dbReference>
<dbReference type="CDD" id="cd14048">
    <property type="entry name" value="STKc_EIF2AK3_PERK"/>
    <property type="match status" value="1"/>
</dbReference>
<dbReference type="FunFam" id="2.130.10.10:FF:003372">
    <property type="entry name" value="Eukaryotic translation initiation factor 2-alpha kinase pek-1"/>
    <property type="match status" value="1"/>
</dbReference>
<dbReference type="FunFam" id="3.30.200.20:FF:000895">
    <property type="entry name" value="Transmembrane ion channel"/>
    <property type="match status" value="1"/>
</dbReference>
<dbReference type="Gene3D" id="3.30.200.20">
    <property type="entry name" value="Phosphorylase Kinase, domain 1"/>
    <property type="match status" value="1"/>
</dbReference>
<dbReference type="Gene3D" id="1.10.510.10">
    <property type="entry name" value="Transferase(Phosphotransferase) domain 1"/>
    <property type="match status" value="1"/>
</dbReference>
<dbReference type="Gene3D" id="2.130.10.10">
    <property type="entry name" value="YVTN repeat-like/Quinoprotein amine dehydrogenase"/>
    <property type="match status" value="1"/>
</dbReference>
<dbReference type="InterPro" id="IPR050339">
    <property type="entry name" value="CC_SR_Kinase"/>
</dbReference>
<dbReference type="InterPro" id="IPR011009">
    <property type="entry name" value="Kinase-like_dom_sf"/>
</dbReference>
<dbReference type="InterPro" id="IPR018391">
    <property type="entry name" value="PQQ_b-propeller_rpt"/>
</dbReference>
<dbReference type="InterPro" id="IPR000719">
    <property type="entry name" value="Prot_kinase_dom"/>
</dbReference>
<dbReference type="InterPro" id="IPR017441">
    <property type="entry name" value="Protein_kinase_ATP_BS"/>
</dbReference>
<dbReference type="InterPro" id="IPR011047">
    <property type="entry name" value="Quinoprotein_ADH-like_sf"/>
</dbReference>
<dbReference type="InterPro" id="IPR008271">
    <property type="entry name" value="Ser/Thr_kinase_AS"/>
</dbReference>
<dbReference type="InterPro" id="IPR015943">
    <property type="entry name" value="WD40/YVTN_repeat-like_dom_sf"/>
</dbReference>
<dbReference type="PANTHER" id="PTHR11042:SF91">
    <property type="entry name" value="EUKARYOTIC TRANSLATION INITIATION FACTOR 2-ALPHA KINASE"/>
    <property type="match status" value="1"/>
</dbReference>
<dbReference type="PANTHER" id="PTHR11042">
    <property type="entry name" value="EUKARYOTIC TRANSLATION INITIATION FACTOR 2-ALPHA KINASE EIF2-ALPHA KINASE -RELATED"/>
    <property type="match status" value="1"/>
</dbReference>
<dbReference type="Pfam" id="PF00069">
    <property type="entry name" value="Pkinase"/>
    <property type="match status" value="2"/>
</dbReference>
<dbReference type="SMART" id="SM00564">
    <property type="entry name" value="PQQ"/>
    <property type="match status" value="1"/>
</dbReference>
<dbReference type="SMART" id="SM00220">
    <property type="entry name" value="S_TKc"/>
    <property type="match status" value="1"/>
</dbReference>
<dbReference type="SUPFAM" id="SSF56112">
    <property type="entry name" value="Protein kinase-like (PK-like)"/>
    <property type="match status" value="1"/>
</dbReference>
<dbReference type="SUPFAM" id="SSF50998">
    <property type="entry name" value="Quinoprotein alcohol dehydrogenase-like"/>
    <property type="match status" value="1"/>
</dbReference>
<dbReference type="PROSITE" id="PS00107">
    <property type="entry name" value="PROTEIN_KINASE_ATP"/>
    <property type="match status" value="1"/>
</dbReference>
<dbReference type="PROSITE" id="PS50011">
    <property type="entry name" value="PROTEIN_KINASE_DOM"/>
    <property type="match status" value="1"/>
</dbReference>
<dbReference type="PROSITE" id="PS00108">
    <property type="entry name" value="PROTEIN_KINASE_ST"/>
    <property type="match status" value="1"/>
</dbReference>
<evidence type="ECO:0000250" key="1"/>
<evidence type="ECO:0000250" key="2">
    <source>
        <dbReference type="UniProtKB" id="Q9Z2B5"/>
    </source>
</evidence>
<evidence type="ECO:0000255" key="3"/>
<evidence type="ECO:0000255" key="4">
    <source>
        <dbReference type="PROSITE-ProRule" id="PRU00159"/>
    </source>
</evidence>
<evidence type="ECO:0000255" key="5">
    <source>
        <dbReference type="PROSITE-ProRule" id="PRU10027"/>
    </source>
</evidence>
<evidence type="ECO:0000256" key="6">
    <source>
        <dbReference type="SAM" id="MobiDB-lite"/>
    </source>
</evidence>
<evidence type="ECO:0000269" key="7">
    <source>
    </source>
</evidence>
<evidence type="ECO:0000269" key="8">
    <source>
    </source>
</evidence>
<evidence type="ECO:0000303" key="9">
    <source>
    </source>
</evidence>
<evidence type="ECO:0000305" key="10">
    <source>
    </source>
</evidence>
<accession>Q19192</accession>
<accession>Q20458</accession>
<feature type="signal peptide" evidence="3">
    <location>
        <begin position="1"/>
        <end position="23"/>
    </location>
</feature>
<feature type="chain" id="PRO_0000024325" description="Eukaryotic translation initiation factor 2-alpha kinase pek-1">
    <location>
        <begin position="24"/>
        <end position="1077"/>
    </location>
</feature>
<feature type="topological domain" description="Lumenal" evidence="3">
    <location>
        <begin position="24"/>
        <end position="453"/>
    </location>
</feature>
<feature type="transmembrane region" description="Helical" evidence="3">
    <location>
        <begin position="454"/>
        <end position="474"/>
    </location>
</feature>
<feature type="topological domain" description="Cytoplasmic" evidence="3">
    <location>
        <begin position="475"/>
        <end position="1077"/>
    </location>
</feature>
<feature type="domain" description="Protein kinase" evidence="4">
    <location>
        <begin position="604"/>
        <end position="1076"/>
    </location>
</feature>
<feature type="region of interest" description="Disordered" evidence="6">
    <location>
        <begin position="727"/>
        <end position="834"/>
    </location>
</feature>
<feature type="compositionally biased region" description="Polar residues" evidence="6">
    <location>
        <begin position="732"/>
        <end position="746"/>
    </location>
</feature>
<feature type="compositionally biased region" description="Basic and acidic residues" evidence="6">
    <location>
        <begin position="766"/>
        <end position="778"/>
    </location>
</feature>
<feature type="compositionally biased region" description="Acidic residues" evidence="6">
    <location>
        <begin position="783"/>
        <end position="796"/>
    </location>
</feature>
<feature type="compositionally biased region" description="Low complexity" evidence="6">
    <location>
        <begin position="797"/>
        <end position="808"/>
    </location>
</feature>
<feature type="active site" description="Proton acceptor" evidence="4 5">
    <location>
        <position position="933"/>
    </location>
</feature>
<feature type="binding site" evidence="4">
    <location>
        <begin position="610"/>
        <end position="618"/>
    </location>
    <ligand>
        <name>ATP</name>
        <dbReference type="ChEBI" id="CHEBI:30616"/>
    </ligand>
</feature>
<feature type="binding site" evidence="4">
    <location>
        <position position="633"/>
    </location>
    <ligand>
        <name>ATP</name>
        <dbReference type="ChEBI" id="CHEBI:30616"/>
    </ligand>
</feature>
<feature type="glycosylation site" description="N-linked (GlcNAc...) asparagine" evidence="3">
    <location>
        <position position="206"/>
    </location>
</feature>
<keyword id="KW-0067">ATP-binding</keyword>
<keyword id="KW-0256">Endoplasmic reticulum</keyword>
<keyword id="KW-0325">Glycoprotein</keyword>
<keyword id="KW-0418">Kinase</keyword>
<keyword id="KW-0472">Membrane</keyword>
<keyword id="KW-0547">Nucleotide-binding</keyword>
<keyword id="KW-0597">Phosphoprotein</keyword>
<keyword id="KW-1185">Reference proteome</keyword>
<keyword id="KW-0723">Serine/threonine-protein kinase</keyword>
<keyword id="KW-0732">Signal</keyword>
<keyword id="KW-0346">Stress response</keyword>
<keyword id="KW-0808">Transferase</keyword>
<keyword id="KW-0810">Translation regulation</keyword>
<keyword id="KW-0812">Transmembrane</keyword>
<keyword id="KW-1133">Transmembrane helix</keyword>
<keyword id="KW-0834">Unfolded protein response</keyword>
<gene>
    <name type="primary">pek-1</name>
    <name type="ORF">F46C3.1</name>
</gene>
<proteinExistence type="evidence at protein level"/>
<comment type="function">
    <text evidence="7 8 9">Phosphorylates the alpha subunit of eukaryotic translation-initiation factor 2 (eIF2alpha), leading to its inactivation and thus to a rapid reduction of translational initiation and repression of global protein synthesis (PubMed:10677345). May phosphorylate eIF2alpha during hypoxia (PubMed:20733002). Proposed to have a role in alleviating endoplasmic reticulum stress (PubMed:10677345, PubMed:11779465, PubMed:16184190).</text>
</comment>
<comment type="catalytic activity">
    <reaction evidence="7">
        <text>L-seryl-[protein] + ATP = O-phospho-L-seryl-[protein] + ADP + H(+)</text>
        <dbReference type="Rhea" id="RHEA:17989"/>
        <dbReference type="Rhea" id="RHEA-COMP:9863"/>
        <dbReference type="Rhea" id="RHEA-COMP:11604"/>
        <dbReference type="ChEBI" id="CHEBI:15378"/>
        <dbReference type="ChEBI" id="CHEBI:29999"/>
        <dbReference type="ChEBI" id="CHEBI:30616"/>
        <dbReference type="ChEBI" id="CHEBI:83421"/>
        <dbReference type="ChEBI" id="CHEBI:456216"/>
        <dbReference type="EC" id="2.7.11.1"/>
    </reaction>
</comment>
<comment type="catalytic activity">
    <reaction evidence="7">
        <text>L-threonyl-[protein] + ATP = O-phospho-L-threonyl-[protein] + ADP + H(+)</text>
        <dbReference type="Rhea" id="RHEA:46608"/>
        <dbReference type="Rhea" id="RHEA-COMP:11060"/>
        <dbReference type="Rhea" id="RHEA-COMP:11605"/>
        <dbReference type="ChEBI" id="CHEBI:15378"/>
        <dbReference type="ChEBI" id="CHEBI:30013"/>
        <dbReference type="ChEBI" id="CHEBI:30616"/>
        <dbReference type="ChEBI" id="CHEBI:61977"/>
        <dbReference type="ChEBI" id="CHEBI:456216"/>
        <dbReference type="EC" id="2.7.11.1"/>
    </reaction>
</comment>
<comment type="activity regulation">
    <text evidence="2">Perturbation in protein folding in the endoplasmic reticulum (ER) promotes reversible dissociation from HSPA5/BIP and oligomerization, resulting in transautophosphorylation and kinase activity induction (By similarity).</text>
</comment>
<comment type="subunit">
    <text evidence="1">Forms dimers with HSPA5/BIP in resting cells. Oligomerizes in ER-stressed cells (By similarity).</text>
</comment>
<comment type="subcellular location">
    <subcellularLocation>
        <location evidence="1">Endoplasmic reticulum membrane</location>
        <topology evidence="1">Single-pass type I membrane protein</topology>
    </subcellularLocation>
</comment>
<comment type="tissue specificity">
    <text evidence="8">Expressed in intestinal cells.</text>
</comment>
<comment type="induction">
    <text evidence="7">By ER stress.</text>
</comment>
<comment type="domain">
    <text evidence="1">The lumenal domain senses perturbations in protein folding in the ER, probably through reversible interaction with HSPA5/BIP.</text>
</comment>
<comment type="PTM">
    <text evidence="1">Autophosphorylated.</text>
</comment>
<comment type="PTM">
    <text evidence="1">N-glycosylated.</text>
</comment>
<comment type="disruption phenotype">
    <text evidence="8">After L2 growth stage movement is subdued and development is stunted. Increased sensitivity to tunicamycin which induces an unfolded protein response symptomatic of endoplasmic reticulum stress.</text>
</comment>
<comment type="similarity">
    <text evidence="4">Belongs to the protein kinase superfamily. Ser/Thr protein kinase family. GCN2 subfamily.</text>
</comment>
<sequence length="1077" mass="119639">MSVYYIVLAGFLLFMALVPFNAGQQYIDDDIEVVSSCQNGYVQNAGCDQNSQVNIIITATLDGVVTALDGETGEMIWRYEDAPLLRGTLSTSDPIDIGGTSLQLMPTLDGRLFSYTHNTNLIEPLPITTDSLLESTIRLGQDAVAGGKSVTTKGFDLFTGEQKYECSMESCGPGDTETPKNPIILIRRTTNSIRAMDTLRGIERWNLSTAEIGVTLAGGITSPTLVSDVKILLQPPDGVIVAVDKYNREEWKTNVDGHIVSVWQVYGNQIGEISIFDPSNIFTTQYEVMQREQHNLQTQSSLLYMGTSNGFPFIIQSPKAKNNLKQRMNALPELSTMTELTNPRFCTANEETRSLAYNVKDETLRLVLHNAFRHSQSKAIEDKSLSGSSARRKLQIIASDTEVSAQRIGTENLRSTSVSKSGDYGYLVLESEPQRVKFKVNSPITLMQTIFSYIFNPTAVVSFLAGLIGVTVAVVYNKIAKSSPRMIEHLSSTESAETESASHRTRTTSFAPTDDEIERFVEEGSDLSTTPIGAIHRKPLMPIEKSNIETHTQPQIKPVQRLVKTDIDTDEDSFSNDEKKRLLRNRTISRSSLEGFTSRFANEFEVKKVIGHGGFGVVFRAQSITDMNEYAVKRIAVADNDKARNRVLREARALAMFDHPGIIRYFYAWEERPPKGFQEKEDENLLGKIKAEKLAKLHEIKKAKKHTSEGKRVRSADTASFAESFAMPPVVGNTTDAENSWSTSAKPQEVGAKRTTSESKLGLHGGSDRTTAELKEESVAFSESDEESDTTEDSSSSDESPSSSSGSSIDDEPKKYNSSSGGIEFVDGSDDVDNEAVKETKKEIAVIEELSIHNRAMIVETENQELEVRERNDTGDCAYLYIVMQLCAEKTLEDWIRRSKTMESRPLFTMKNWIKQLASGLEYLHNKGFIHRDLKPGNVFFSLDSTHGHQILKIGDLGLATKTDGAPKITVRQDSDSSAKHTKNVGTRSYMSPEQLKHQQYTEKVDIFALGLVATELIISFSTASERIHTFADFQKGDIPAILDNVPESRDFLLQLTSLEPSERPTAHEVATHKFLQ</sequence>